<evidence type="ECO:0000255" key="1">
    <source>
        <dbReference type="HAMAP-Rule" id="MF_00539"/>
    </source>
</evidence>
<evidence type="ECO:0000305" key="2"/>
<proteinExistence type="inferred from homology"/>
<organism>
    <name type="scientific">Stutzerimonas stutzeri (strain A1501)</name>
    <name type="common">Pseudomonas stutzeri</name>
    <dbReference type="NCBI Taxonomy" id="379731"/>
    <lineage>
        <taxon>Bacteria</taxon>
        <taxon>Pseudomonadati</taxon>
        <taxon>Pseudomonadota</taxon>
        <taxon>Gammaproteobacteria</taxon>
        <taxon>Pseudomonadales</taxon>
        <taxon>Pseudomonadaceae</taxon>
        <taxon>Stutzerimonas</taxon>
    </lineage>
</organism>
<comment type="similarity">
    <text evidence="1">Belongs to the bacterial ribosomal protein bL27 family.</text>
</comment>
<accession>A4VI53</accession>
<name>RL27_STUS1</name>
<sequence length="85" mass="9066">MAHKKAGGSTRNGRDSEAKRLGVKMYGGQAIKAGNIIVRQRGTQFHAGYGVGMGKDHTLFAKVEGVVKFEVKGAFGRRYVSVVAA</sequence>
<dbReference type="EMBL" id="CP000304">
    <property type="protein sequence ID" value="ABP78654.1"/>
    <property type="molecule type" value="Genomic_DNA"/>
</dbReference>
<dbReference type="RefSeq" id="WP_011912146.1">
    <property type="nucleotide sequence ID" value="NC_009434.1"/>
</dbReference>
<dbReference type="SMR" id="A4VI53"/>
<dbReference type="GeneID" id="75213545"/>
<dbReference type="KEGG" id="psa:PST_0957"/>
<dbReference type="eggNOG" id="COG0211">
    <property type="taxonomic scope" value="Bacteria"/>
</dbReference>
<dbReference type="HOGENOM" id="CLU_095424_4_1_6"/>
<dbReference type="Proteomes" id="UP000000233">
    <property type="component" value="Chromosome"/>
</dbReference>
<dbReference type="GO" id="GO:0022625">
    <property type="term" value="C:cytosolic large ribosomal subunit"/>
    <property type="evidence" value="ECO:0007669"/>
    <property type="project" value="TreeGrafter"/>
</dbReference>
<dbReference type="GO" id="GO:0003735">
    <property type="term" value="F:structural constituent of ribosome"/>
    <property type="evidence" value="ECO:0007669"/>
    <property type="project" value="InterPro"/>
</dbReference>
<dbReference type="GO" id="GO:0006412">
    <property type="term" value="P:translation"/>
    <property type="evidence" value="ECO:0007669"/>
    <property type="project" value="UniProtKB-UniRule"/>
</dbReference>
<dbReference type="FunFam" id="2.40.50.100:FF:000001">
    <property type="entry name" value="50S ribosomal protein L27"/>
    <property type="match status" value="1"/>
</dbReference>
<dbReference type="Gene3D" id="2.40.50.100">
    <property type="match status" value="1"/>
</dbReference>
<dbReference type="HAMAP" id="MF_00539">
    <property type="entry name" value="Ribosomal_bL27"/>
    <property type="match status" value="1"/>
</dbReference>
<dbReference type="InterPro" id="IPR001684">
    <property type="entry name" value="Ribosomal_bL27"/>
</dbReference>
<dbReference type="InterPro" id="IPR018261">
    <property type="entry name" value="Ribosomal_bL27_CS"/>
</dbReference>
<dbReference type="NCBIfam" id="TIGR00062">
    <property type="entry name" value="L27"/>
    <property type="match status" value="1"/>
</dbReference>
<dbReference type="PANTHER" id="PTHR15893:SF0">
    <property type="entry name" value="LARGE RIBOSOMAL SUBUNIT PROTEIN BL27M"/>
    <property type="match status" value="1"/>
</dbReference>
<dbReference type="PANTHER" id="PTHR15893">
    <property type="entry name" value="RIBOSOMAL PROTEIN L27"/>
    <property type="match status" value="1"/>
</dbReference>
<dbReference type="Pfam" id="PF01016">
    <property type="entry name" value="Ribosomal_L27"/>
    <property type="match status" value="1"/>
</dbReference>
<dbReference type="PRINTS" id="PR00063">
    <property type="entry name" value="RIBOSOMALL27"/>
</dbReference>
<dbReference type="SUPFAM" id="SSF110324">
    <property type="entry name" value="Ribosomal L27 protein-like"/>
    <property type="match status" value="1"/>
</dbReference>
<dbReference type="PROSITE" id="PS00831">
    <property type="entry name" value="RIBOSOMAL_L27"/>
    <property type="match status" value="1"/>
</dbReference>
<keyword id="KW-1185">Reference proteome</keyword>
<keyword id="KW-0687">Ribonucleoprotein</keyword>
<keyword id="KW-0689">Ribosomal protein</keyword>
<feature type="chain" id="PRO_1000017566" description="Large ribosomal subunit protein bL27">
    <location>
        <begin position="1"/>
        <end position="85"/>
    </location>
</feature>
<gene>
    <name evidence="1" type="primary">rpmA</name>
    <name type="ordered locus">PST_0957</name>
</gene>
<protein>
    <recommendedName>
        <fullName evidence="1">Large ribosomal subunit protein bL27</fullName>
    </recommendedName>
    <alternativeName>
        <fullName evidence="2">50S ribosomal protein L27</fullName>
    </alternativeName>
</protein>
<reference key="1">
    <citation type="journal article" date="2008" name="Proc. Natl. Acad. Sci. U.S.A.">
        <title>Nitrogen fixation island and rhizosphere competence traits in the genome of root-associated Pseudomonas stutzeri A1501.</title>
        <authorList>
            <person name="Yan Y."/>
            <person name="Yang J."/>
            <person name="Dou Y."/>
            <person name="Chen M."/>
            <person name="Ping S."/>
            <person name="Peng J."/>
            <person name="Lu W."/>
            <person name="Zhang W."/>
            <person name="Yao Z."/>
            <person name="Li H."/>
            <person name="Liu W."/>
            <person name="He S."/>
            <person name="Geng L."/>
            <person name="Zhang X."/>
            <person name="Yang F."/>
            <person name="Yu H."/>
            <person name="Zhan Y."/>
            <person name="Li D."/>
            <person name="Lin Z."/>
            <person name="Wang Y."/>
            <person name="Elmerich C."/>
            <person name="Lin M."/>
            <person name="Jin Q."/>
        </authorList>
    </citation>
    <scope>NUCLEOTIDE SEQUENCE [LARGE SCALE GENOMIC DNA]</scope>
    <source>
        <strain>A1501</strain>
    </source>
</reference>